<dbReference type="EC" id="1.17.99.9" evidence="1"/>
<dbReference type="EMBL" id="CP001215">
    <property type="protein sequence ID" value="ACP14568.1"/>
    <property type="molecule type" value="Genomic_DNA"/>
</dbReference>
<dbReference type="RefSeq" id="WP_001188730.1">
    <property type="nucleotide sequence ID" value="NC_012581.1"/>
</dbReference>
<dbReference type="SMR" id="C3LI12"/>
<dbReference type="GeneID" id="45023833"/>
<dbReference type="KEGG" id="bah:BAMEG_4199"/>
<dbReference type="HOGENOM" id="CLU_041525_3_1_9"/>
<dbReference type="UniPathway" id="UPA00269">
    <property type="reaction ID" value="UER00713"/>
</dbReference>
<dbReference type="GO" id="GO:0005886">
    <property type="term" value="C:plasma membrane"/>
    <property type="evidence" value="ECO:0007669"/>
    <property type="project" value="UniProtKB-SubCell"/>
</dbReference>
<dbReference type="GO" id="GO:0046872">
    <property type="term" value="F:metal ion binding"/>
    <property type="evidence" value="ECO:0007669"/>
    <property type="project" value="UniProtKB-KW"/>
</dbReference>
<dbReference type="GO" id="GO:0016653">
    <property type="term" value="F:oxidoreductase activity, acting on NAD(P)H, heme protein as acceptor"/>
    <property type="evidence" value="ECO:0007669"/>
    <property type="project" value="InterPro"/>
</dbReference>
<dbReference type="GO" id="GO:0006784">
    <property type="term" value="P:heme A biosynthetic process"/>
    <property type="evidence" value="ECO:0007669"/>
    <property type="project" value="UniProtKB-UniRule"/>
</dbReference>
<dbReference type="HAMAP" id="MF_01664">
    <property type="entry name" value="HemeA_synth_type1"/>
    <property type="match status" value="1"/>
</dbReference>
<dbReference type="InterPro" id="IPR003780">
    <property type="entry name" value="COX15/CtaA_fam"/>
</dbReference>
<dbReference type="InterPro" id="IPR050450">
    <property type="entry name" value="COX15/CtaA_HemeA_synthase"/>
</dbReference>
<dbReference type="InterPro" id="IPR023755">
    <property type="entry name" value="HemeA_Synthase_type1"/>
</dbReference>
<dbReference type="PANTHER" id="PTHR35457">
    <property type="entry name" value="HEME A SYNTHASE"/>
    <property type="match status" value="1"/>
</dbReference>
<dbReference type="PANTHER" id="PTHR35457:SF1">
    <property type="entry name" value="HEME A SYNTHASE"/>
    <property type="match status" value="1"/>
</dbReference>
<dbReference type="Pfam" id="PF02628">
    <property type="entry name" value="COX15-CtaA"/>
    <property type="match status" value="1"/>
</dbReference>
<evidence type="ECO:0000255" key="1">
    <source>
        <dbReference type="HAMAP-Rule" id="MF_01664"/>
    </source>
</evidence>
<protein>
    <recommendedName>
        <fullName evidence="1">Heme A synthase</fullName>
        <shortName evidence="1">HAS</shortName>
        <ecNumber evidence="1">1.17.99.9</ecNumber>
    </recommendedName>
    <alternativeName>
        <fullName evidence="1">Cytochrome aa3-controlling protein</fullName>
    </alternativeName>
</protein>
<organism>
    <name type="scientific">Bacillus anthracis (strain CDC 684 / NRRL 3495)</name>
    <dbReference type="NCBI Taxonomy" id="568206"/>
    <lineage>
        <taxon>Bacteria</taxon>
        <taxon>Bacillati</taxon>
        <taxon>Bacillota</taxon>
        <taxon>Bacilli</taxon>
        <taxon>Bacillales</taxon>
        <taxon>Bacillaceae</taxon>
        <taxon>Bacillus</taxon>
        <taxon>Bacillus cereus group</taxon>
    </lineage>
</organism>
<name>CTAA_BACAC</name>
<keyword id="KW-1003">Cell membrane</keyword>
<keyword id="KW-1015">Disulfide bond</keyword>
<keyword id="KW-0350">Heme biosynthesis</keyword>
<keyword id="KW-0408">Iron</keyword>
<keyword id="KW-0472">Membrane</keyword>
<keyword id="KW-0479">Metal-binding</keyword>
<keyword id="KW-0560">Oxidoreductase</keyword>
<keyword id="KW-0812">Transmembrane</keyword>
<keyword id="KW-1133">Transmembrane helix</keyword>
<proteinExistence type="inferred from homology"/>
<feature type="chain" id="PRO_1000187235" description="Heme A synthase">
    <location>
        <begin position="1"/>
        <end position="311"/>
    </location>
</feature>
<feature type="topological domain" description="Cytoplasmic" evidence="1">
    <location>
        <begin position="1"/>
        <end position="6"/>
    </location>
</feature>
<feature type="transmembrane region" description="Helical" evidence="1">
    <location>
        <begin position="7"/>
        <end position="27"/>
    </location>
</feature>
<feature type="topological domain" description="Extracellular" evidence="1">
    <location>
        <begin position="28"/>
        <end position="62"/>
    </location>
</feature>
<feature type="transmembrane region" description="Helical" evidence="1">
    <location>
        <begin position="63"/>
        <end position="83"/>
    </location>
</feature>
<feature type="topological domain" description="Cytoplasmic" evidence="1">
    <location>
        <begin position="84"/>
        <end position="91"/>
    </location>
</feature>
<feature type="transmembrane region" description="Helical" evidence="1">
    <location>
        <begin position="92"/>
        <end position="112"/>
    </location>
</feature>
<feature type="topological domain" description="Extracellular" evidence="1">
    <location>
        <begin position="113"/>
        <end position="121"/>
    </location>
</feature>
<feature type="transmembrane region" description="Helical" evidence="1">
    <location>
        <begin position="122"/>
        <end position="142"/>
    </location>
</feature>
<feature type="topological domain" description="Cytoplasmic" evidence="1">
    <location>
        <begin position="143"/>
        <end position="159"/>
    </location>
</feature>
<feature type="transmembrane region" description="Helical" evidence="1">
    <location>
        <begin position="160"/>
        <end position="180"/>
    </location>
</feature>
<feature type="topological domain" description="Extracellular" evidence="1">
    <location>
        <begin position="181"/>
        <end position="211"/>
    </location>
</feature>
<feature type="transmembrane region" description="Helical" evidence="1">
    <location>
        <begin position="212"/>
        <end position="232"/>
    </location>
</feature>
<feature type="topological domain" description="Cytoplasmic" evidence="1">
    <location>
        <begin position="233"/>
        <end position="243"/>
    </location>
</feature>
<feature type="transmembrane region" description="Helical" evidence="1">
    <location>
        <begin position="244"/>
        <end position="264"/>
    </location>
</feature>
<feature type="topological domain" description="Extracellular" evidence="1">
    <location>
        <begin position="265"/>
        <end position="271"/>
    </location>
</feature>
<feature type="transmembrane region" description="Helical" evidence="1">
    <location>
        <begin position="272"/>
        <end position="292"/>
    </location>
</feature>
<feature type="topological domain" description="Cytoplasmic" evidence="1">
    <location>
        <begin position="293"/>
        <end position="311"/>
    </location>
</feature>
<feature type="active site" evidence="1">
    <location>
        <position position="58"/>
    </location>
</feature>
<feature type="binding site" description="axial binding residue" evidence="1">
    <location>
        <position position="61"/>
    </location>
    <ligand>
        <name>heme o</name>
        <dbReference type="ChEBI" id="CHEBI:24480"/>
    </ligand>
    <ligandPart>
        <name>Fe</name>
        <dbReference type="ChEBI" id="CHEBI:18248"/>
    </ligandPart>
</feature>
<feature type="binding site" description="axial binding residue" evidence="1">
    <location>
        <position position="123"/>
    </location>
    <ligand>
        <name>heme o</name>
        <dbReference type="ChEBI" id="CHEBI:24480"/>
    </ligand>
    <ligandPart>
        <name>Fe</name>
        <dbReference type="ChEBI" id="CHEBI:18248"/>
    </ligandPart>
</feature>
<feature type="binding site" description="axial binding residue" evidence="1">
    <location>
        <position position="213"/>
    </location>
    <ligand>
        <name>heme b</name>
        <dbReference type="ChEBI" id="CHEBI:60344"/>
    </ligand>
    <ligandPart>
        <name>Fe</name>
        <dbReference type="ChEBI" id="CHEBI:18248"/>
    </ligandPart>
</feature>
<feature type="binding site" description="axial binding residue" evidence="1">
    <location>
        <position position="275"/>
    </location>
    <ligand>
        <name>heme b</name>
        <dbReference type="ChEBI" id="CHEBI:60344"/>
    </ligand>
    <ligandPart>
        <name>Fe</name>
        <dbReference type="ChEBI" id="CHEBI:18248"/>
    </ligandPart>
</feature>
<feature type="disulfide bond" description="Essential for catalytic activity" evidence="1">
    <location>
        <begin position="35"/>
        <end position="42"/>
    </location>
</feature>
<feature type="disulfide bond" evidence="1">
    <location>
        <begin position="189"/>
        <end position="195"/>
    </location>
</feature>
<reference key="1">
    <citation type="submission" date="2008-10" db="EMBL/GenBank/DDBJ databases">
        <title>Genome sequence of Bacillus anthracis str. CDC 684.</title>
        <authorList>
            <person name="Dodson R.J."/>
            <person name="Munk A.C."/>
            <person name="Brettin T."/>
            <person name="Bruce D."/>
            <person name="Detter C."/>
            <person name="Tapia R."/>
            <person name="Han C."/>
            <person name="Sutton G."/>
            <person name="Sims D."/>
        </authorList>
    </citation>
    <scope>NUCLEOTIDE SEQUENCE [LARGE SCALE GENOMIC DNA]</scope>
    <source>
        <strain>CDC 684 / NRRL 3495</strain>
    </source>
</reference>
<comment type="function">
    <text evidence="1">Catalyzes the conversion of heme O to heme A by two successive hydroxylations of the methyl group at C8. The first hydroxylation forms heme I, the second hydroxylation results in an unstable dihydroxymethyl group, which spontaneously dehydrates, resulting in the formyl group of heme A.</text>
</comment>
<comment type="catalytic activity">
    <reaction evidence="1">
        <text>Fe(II)-heme o + 2 A + H2O = Fe(II)-heme a + 2 AH2</text>
        <dbReference type="Rhea" id="RHEA:63388"/>
        <dbReference type="ChEBI" id="CHEBI:13193"/>
        <dbReference type="ChEBI" id="CHEBI:15377"/>
        <dbReference type="ChEBI" id="CHEBI:17499"/>
        <dbReference type="ChEBI" id="CHEBI:60530"/>
        <dbReference type="ChEBI" id="CHEBI:61715"/>
        <dbReference type="EC" id="1.17.99.9"/>
    </reaction>
    <physiologicalReaction direction="left-to-right" evidence="1">
        <dbReference type="Rhea" id="RHEA:63389"/>
    </physiologicalReaction>
</comment>
<comment type="cofactor">
    <cofactor evidence="1">
        <name>heme b</name>
        <dbReference type="ChEBI" id="CHEBI:60344"/>
    </cofactor>
</comment>
<comment type="pathway">
    <text evidence="1">Porphyrin-containing compound metabolism; heme A biosynthesis; heme A from heme O: step 1/1.</text>
</comment>
<comment type="subunit">
    <text evidence="1">Interacts with CtaB.</text>
</comment>
<comment type="subcellular location">
    <subcellularLocation>
        <location evidence="1">Cell membrane</location>
        <topology evidence="1">Multi-pass membrane protein</topology>
    </subcellularLocation>
</comment>
<comment type="domain">
    <text evidence="1">The N-half (TM1-TM4) and C-half (TM5-TM8) domains are connected by an intracellular loop. Each domain is formed from four-helix bundles and they align in a pseudo twofold symmetry manner. The N-half domain is the substrate-heme O binding domain and the C-half domain is the cofactor heme B binding domain.</text>
</comment>
<comment type="domain">
    <text evidence="1">The cysteines of disulfide bond Cys-35 and Cys-42 may be involved in transfer of reducing equivalents from quinol in the membrane to the active site of the enzyme.</text>
</comment>
<comment type="similarity">
    <text evidence="1">Belongs to the COX15/CtaA family. Type 1 subfamily.</text>
</comment>
<accession>C3LI12</accession>
<sequence>MQRFIKWLAVITSLDLLIVLLGGALVTKTGSGQGCGKSWPLCNGEFVPSNLSMETIIELSHRLTSGSAGILVTLLCILSWKYYKHVRETKTLAILSFVFLVAQALMGAAAVVWGQMPAVLAIHFGISLISFASVILLTCLIFEIDQKFDARSLIMDKKMKFHIYGVTIYCYLVVYTGALVRHERASLACPDFPLCSKNRPMPTQLHEWVQMGHRLAAMLIFVWILYAMILAIRHYKQQPVVYWGWIISFILVTLQAIVGILVVFTNASLAMALLHSLFISCLFAVLCYLVMLGTRSKVNAKEAASTSKQTK</sequence>
<gene>
    <name evidence="1" type="primary">ctaA</name>
    <name type="ordered locus">BAMEG_4199</name>
</gene>